<gene>
    <name evidence="1" type="primary">cmk</name>
    <name type="ordered locus">SSA_1501</name>
</gene>
<sequence>MKQIQIAIDGPASSGKSTVAKIIAKDFGYTYLDTGAMYRAATYLALRHHLTEEDATEIVDLLNNHSVSFGRAEDGEQLVFVGDVDVTHPIRENEVTNNVSWVSAIPQVREKLVALQQQIAAQGGIVMDGRDIGTVVLPQAELKIYLVASVEERAERRYKENLSKGIPADLEKLKEEIAERDYKDSHREVSPLRPADDAIHFDTTGIGISEVVAFIEEKAKKIIDK</sequence>
<evidence type="ECO:0000255" key="1">
    <source>
        <dbReference type="HAMAP-Rule" id="MF_00238"/>
    </source>
</evidence>
<reference key="1">
    <citation type="journal article" date="2007" name="J. Bacteriol.">
        <title>Genome of the opportunistic pathogen Streptococcus sanguinis.</title>
        <authorList>
            <person name="Xu P."/>
            <person name="Alves J.M."/>
            <person name="Kitten T."/>
            <person name="Brown A."/>
            <person name="Chen Z."/>
            <person name="Ozaki L.S."/>
            <person name="Manque P."/>
            <person name="Ge X."/>
            <person name="Serrano M.G."/>
            <person name="Puiu D."/>
            <person name="Hendricks S."/>
            <person name="Wang Y."/>
            <person name="Chaplin M.D."/>
            <person name="Akan D."/>
            <person name="Paik S."/>
            <person name="Peterson D.L."/>
            <person name="Macrina F.L."/>
            <person name="Buck G.A."/>
        </authorList>
    </citation>
    <scope>NUCLEOTIDE SEQUENCE [LARGE SCALE GENOMIC DNA]</scope>
    <source>
        <strain>SK36</strain>
    </source>
</reference>
<organism>
    <name type="scientific">Streptococcus sanguinis (strain SK36)</name>
    <dbReference type="NCBI Taxonomy" id="388919"/>
    <lineage>
        <taxon>Bacteria</taxon>
        <taxon>Bacillati</taxon>
        <taxon>Bacillota</taxon>
        <taxon>Bacilli</taxon>
        <taxon>Lactobacillales</taxon>
        <taxon>Streptococcaceae</taxon>
        <taxon>Streptococcus</taxon>
    </lineage>
</organism>
<protein>
    <recommendedName>
        <fullName evidence="1">Cytidylate kinase</fullName>
        <shortName evidence="1">CK</shortName>
        <ecNumber evidence="1">2.7.4.25</ecNumber>
    </recommendedName>
    <alternativeName>
        <fullName evidence="1">Cytidine monophosphate kinase</fullName>
        <shortName evidence="1">CMP kinase</shortName>
    </alternativeName>
</protein>
<dbReference type="EC" id="2.7.4.25" evidence="1"/>
<dbReference type="EMBL" id="CP000387">
    <property type="protein sequence ID" value="ABN44895.1"/>
    <property type="molecule type" value="Genomic_DNA"/>
</dbReference>
<dbReference type="RefSeq" id="WP_002918748.1">
    <property type="nucleotide sequence ID" value="NC_009009.1"/>
</dbReference>
<dbReference type="RefSeq" id="YP_001035445.1">
    <property type="nucleotide sequence ID" value="NC_009009.1"/>
</dbReference>
<dbReference type="SMR" id="A3CNZ0"/>
<dbReference type="STRING" id="388919.SSA_1501"/>
<dbReference type="KEGG" id="ssa:SSA_1501"/>
<dbReference type="PATRIC" id="fig|388919.9.peg.1425"/>
<dbReference type="eggNOG" id="COG0283">
    <property type="taxonomic scope" value="Bacteria"/>
</dbReference>
<dbReference type="HOGENOM" id="CLU_079959_0_2_9"/>
<dbReference type="OrthoDB" id="9807434at2"/>
<dbReference type="Proteomes" id="UP000002148">
    <property type="component" value="Chromosome"/>
</dbReference>
<dbReference type="GO" id="GO:0005829">
    <property type="term" value="C:cytosol"/>
    <property type="evidence" value="ECO:0007669"/>
    <property type="project" value="TreeGrafter"/>
</dbReference>
<dbReference type="GO" id="GO:0005524">
    <property type="term" value="F:ATP binding"/>
    <property type="evidence" value="ECO:0007669"/>
    <property type="project" value="UniProtKB-UniRule"/>
</dbReference>
<dbReference type="GO" id="GO:0036430">
    <property type="term" value="F:CMP kinase activity"/>
    <property type="evidence" value="ECO:0007669"/>
    <property type="project" value="RHEA"/>
</dbReference>
<dbReference type="GO" id="GO:0036431">
    <property type="term" value="F:dCMP kinase activity"/>
    <property type="evidence" value="ECO:0007669"/>
    <property type="project" value="RHEA"/>
</dbReference>
<dbReference type="GO" id="GO:0015949">
    <property type="term" value="P:nucleobase-containing small molecule interconversion"/>
    <property type="evidence" value="ECO:0007669"/>
    <property type="project" value="TreeGrafter"/>
</dbReference>
<dbReference type="GO" id="GO:0006220">
    <property type="term" value="P:pyrimidine nucleotide metabolic process"/>
    <property type="evidence" value="ECO:0007669"/>
    <property type="project" value="UniProtKB-UniRule"/>
</dbReference>
<dbReference type="CDD" id="cd02020">
    <property type="entry name" value="CMPK"/>
    <property type="match status" value="1"/>
</dbReference>
<dbReference type="FunFam" id="3.40.50.300:FF:000484">
    <property type="entry name" value="Cytidylate kinase"/>
    <property type="match status" value="1"/>
</dbReference>
<dbReference type="Gene3D" id="3.40.50.300">
    <property type="entry name" value="P-loop containing nucleotide triphosphate hydrolases"/>
    <property type="match status" value="1"/>
</dbReference>
<dbReference type="HAMAP" id="MF_00238">
    <property type="entry name" value="Cytidyl_kinase_type1"/>
    <property type="match status" value="1"/>
</dbReference>
<dbReference type="InterPro" id="IPR003136">
    <property type="entry name" value="Cytidylate_kin"/>
</dbReference>
<dbReference type="InterPro" id="IPR011994">
    <property type="entry name" value="Cytidylate_kinase_dom"/>
</dbReference>
<dbReference type="InterPro" id="IPR027417">
    <property type="entry name" value="P-loop_NTPase"/>
</dbReference>
<dbReference type="NCBIfam" id="TIGR00017">
    <property type="entry name" value="cmk"/>
    <property type="match status" value="1"/>
</dbReference>
<dbReference type="PANTHER" id="PTHR21299:SF2">
    <property type="entry name" value="CYTIDYLATE KINASE"/>
    <property type="match status" value="1"/>
</dbReference>
<dbReference type="PANTHER" id="PTHR21299">
    <property type="entry name" value="CYTIDYLATE KINASE/PANTOATE-BETA-ALANINE LIGASE"/>
    <property type="match status" value="1"/>
</dbReference>
<dbReference type="Pfam" id="PF02224">
    <property type="entry name" value="Cytidylate_kin"/>
    <property type="match status" value="1"/>
</dbReference>
<dbReference type="SUPFAM" id="SSF52540">
    <property type="entry name" value="P-loop containing nucleoside triphosphate hydrolases"/>
    <property type="match status" value="1"/>
</dbReference>
<proteinExistence type="inferred from homology"/>
<keyword id="KW-0067">ATP-binding</keyword>
<keyword id="KW-0963">Cytoplasm</keyword>
<keyword id="KW-0418">Kinase</keyword>
<keyword id="KW-0547">Nucleotide-binding</keyword>
<keyword id="KW-1185">Reference proteome</keyword>
<keyword id="KW-0808">Transferase</keyword>
<feature type="chain" id="PRO_1000048302" description="Cytidylate kinase">
    <location>
        <begin position="1"/>
        <end position="225"/>
    </location>
</feature>
<feature type="binding site" evidence="1">
    <location>
        <begin position="10"/>
        <end position="18"/>
    </location>
    <ligand>
        <name>ATP</name>
        <dbReference type="ChEBI" id="CHEBI:30616"/>
    </ligand>
</feature>
<accession>A3CNZ0</accession>
<name>KCY_STRSV</name>
<comment type="catalytic activity">
    <reaction evidence="1">
        <text>CMP + ATP = CDP + ADP</text>
        <dbReference type="Rhea" id="RHEA:11600"/>
        <dbReference type="ChEBI" id="CHEBI:30616"/>
        <dbReference type="ChEBI" id="CHEBI:58069"/>
        <dbReference type="ChEBI" id="CHEBI:60377"/>
        <dbReference type="ChEBI" id="CHEBI:456216"/>
        <dbReference type="EC" id="2.7.4.25"/>
    </reaction>
</comment>
<comment type="catalytic activity">
    <reaction evidence="1">
        <text>dCMP + ATP = dCDP + ADP</text>
        <dbReference type="Rhea" id="RHEA:25094"/>
        <dbReference type="ChEBI" id="CHEBI:30616"/>
        <dbReference type="ChEBI" id="CHEBI:57566"/>
        <dbReference type="ChEBI" id="CHEBI:58593"/>
        <dbReference type="ChEBI" id="CHEBI:456216"/>
        <dbReference type="EC" id="2.7.4.25"/>
    </reaction>
</comment>
<comment type="subcellular location">
    <subcellularLocation>
        <location evidence="1">Cytoplasm</location>
    </subcellularLocation>
</comment>
<comment type="similarity">
    <text evidence="1">Belongs to the cytidylate kinase family. Type 1 subfamily.</text>
</comment>